<sequence length="374" mass="40499">MSVALFCGPPPAVSFGCKDGRGRKGMVRSKDIVRQTVKPPAHACRLIGWNKYPGSVVPTNSSLSPSPTALDDEIELDLSPFLIIYKDGRIERLKGTTVIPACPEVATKDVIIDPATGVSVRLYLPNVVDLPSKKLPVLVYFHGGGFVIENTGSPNYHNYLTLLAAKSGLLIVSVNYRLAPEHPIPASFDDCMAGFNWVVSHSAGPAPEPWLARHGDLTQILISGDSAGGTVTHYVLLRADAGVIEGAALVHPYFLGSKRLENQTEEDFEFHEKLWRLSTPDTEGLDDPLINPLAPGAPSLAGLKCKRAVVFVAELDFLVERGRMYYDALVKSGWGGEAELVHQKGVGHVFHLSDYSGDVSVDMMAKMVAFLRGE</sequence>
<accession>R4X4V6</accession>
<accession>R4WVK6</accession>
<keyword id="KW-0035">Amyloplast</keyword>
<keyword id="KW-0903">Direct protein sequencing</keyword>
<keyword id="KW-0456">Lyase</keyword>
<keyword id="KW-0611">Plant defense</keyword>
<keyword id="KW-0934">Plastid</keyword>
<keyword id="KW-0809">Transit peptide</keyword>
<organism>
    <name type="scientific">Tulipa gesneriana</name>
    <name type="common">Garden tulip</name>
    <dbReference type="NCBI Taxonomy" id="13306"/>
    <lineage>
        <taxon>Eukaryota</taxon>
        <taxon>Viridiplantae</taxon>
        <taxon>Streptophyta</taxon>
        <taxon>Embryophyta</taxon>
        <taxon>Tracheophyta</taxon>
        <taxon>Spermatophyta</taxon>
        <taxon>Magnoliopsida</taxon>
        <taxon>Liliopsida</taxon>
        <taxon>Liliales</taxon>
        <taxon>Liliaceae</taxon>
        <taxon>Tulipa</taxon>
    </lineage>
</organism>
<dbReference type="EC" id="4.2.99.22"/>
<dbReference type="EMBL" id="AB749807">
    <property type="protein sequence ID" value="BAN28566.1"/>
    <property type="molecule type" value="mRNA"/>
</dbReference>
<dbReference type="EMBL" id="AB749809">
    <property type="protein sequence ID" value="BAN28568.1"/>
    <property type="molecule type" value="mRNA"/>
</dbReference>
<dbReference type="EMBL" id="AB749810">
    <property type="protein sequence ID" value="BAN28569.1"/>
    <property type="molecule type" value="mRNA"/>
</dbReference>
<dbReference type="SMR" id="R4X4V6"/>
<dbReference type="ESTHER" id="tulge-tcab2">
    <property type="family name" value="Plant_carboxylesterase"/>
</dbReference>
<dbReference type="GO" id="GO:0009501">
    <property type="term" value="C:amyloplast"/>
    <property type="evidence" value="ECO:0007669"/>
    <property type="project" value="UniProtKB-SubCell"/>
</dbReference>
<dbReference type="GO" id="GO:0016787">
    <property type="term" value="F:hydrolase activity"/>
    <property type="evidence" value="ECO:0007669"/>
    <property type="project" value="InterPro"/>
</dbReference>
<dbReference type="GO" id="GO:0016829">
    <property type="term" value="F:lyase activity"/>
    <property type="evidence" value="ECO:0007669"/>
    <property type="project" value="UniProtKB-KW"/>
</dbReference>
<dbReference type="GO" id="GO:0006952">
    <property type="term" value="P:defense response"/>
    <property type="evidence" value="ECO:0007669"/>
    <property type="project" value="UniProtKB-KW"/>
</dbReference>
<dbReference type="Gene3D" id="3.40.50.1820">
    <property type="entry name" value="alpha/beta hydrolase"/>
    <property type="match status" value="1"/>
</dbReference>
<dbReference type="InterPro" id="IPR013094">
    <property type="entry name" value="AB_hydrolase_3"/>
</dbReference>
<dbReference type="InterPro" id="IPR029058">
    <property type="entry name" value="AB_hydrolase_fold"/>
</dbReference>
<dbReference type="InterPro" id="IPR050466">
    <property type="entry name" value="Carboxylest/Gibb_receptor"/>
</dbReference>
<dbReference type="PANTHER" id="PTHR23024">
    <property type="entry name" value="ARYLACETAMIDE DEACETYLASE"/>
    <property type="match status" value="1"/>
</dbReference>
<dbReference type="PANTHER" id="PTHR23024:SF577">
    <property type="entry name" value="CARBOXYLESTERASE 2-RELATED"/>
    <property type="match status" value="1"/>
</dbReference>
<dbReference type="Pfam" id="PF07859">
    <property type="entry name" value="Abhydrolase_3"/>
    <property type="match status" value="1"/>
</dbReference>
<dbReference type="SUPFAM" id="SSF53474">
    <property type="entry name" value="alpha/beta-Hydrolases"/>
    <property type="match status" value="1"/>
</dbReference>
<feature type="transit peptide" description="Amyloplast" evidence="2">
    <location>
        <begin position="1"/>
        <end position="68"/>
    </location>
</feature>
<feature type="chain" id="PRO_0000423868" description="Tuliposide A-converting enzyme b2, amyloplastic">
    <location>
        <begin position="69"/>
        <end position="374"/>
    </location>
</feature>
<feature type="active site" description="Acyl-ester intermediate" evidence="1">
    <location>
        <position position="226"/>
    </location>
</feature>
<feature type="active site" description="Charge relay system" evidence="1">
    <location>
        <position position="316"/>
    </location>
</feature>
<feature type="active site" description="Charge relay system" evidence="1">
    <location>
        <position position="348"/>
    </location>
</feature>
<feature type="sequence conflict" description="In Ref. 1; BAN28569." evidence="3" ref="1">
    <original>I</original>
    <variation>V</variation>
    <location>
        <position position="148"/>
    </location>
</feature>
<name>TCAB2_TULGE</name>
<protein>
    <recommendedName>
        <fullName>Tuliposide A-converting enzyme b2, amyloplastic</fullName>
        <shortName>TgTCEA-b2</shortName>
        <ecNumber>4.2.99.22</ecNumber>
    </recommendedName>
</protein>
<proteinExistence type="evidence at protein level"/>
<comment type="function">
    <text>Lactone-forming carboxylesterases, specifically catalyzing intramolecular transesterification, but not hydrolysis. Involved in the biosynthesis of tulipalins, defensive chemicals that show antimicrobial activities against a broad range of strains of bacteria and fungi. Substrates are 6-tuliposide A &gt; 6-tuliposide B.</text>
</comment>
<comment type="catalytic activity">
    <reaction>
        <text>6-tuliposide A = tulipalin A + D-glucose</text>
        <dbReference type="Rhea" id="RHEA:36071"/>
        <dbReference type="ChEBI" id="CHEBI:4167"/>
        <dbReference type="ChEBI" id="CHEBI:72781"/>
        <dbReference type="ChEBI" id="CHEBI:104120"/>
        <dbReference type="EC" id="4.2.99.22"/>
    </reaction>
</comment>
<comment type="biophysicochemical properties">
    <kinetics>
        <KM evidence="2">14 mM for 6-tuliposide A</KM>
        <KM evidence="2">49 mM for 6-tuliposide B</KM>
        <text>kcat is 1700 sec(-1) with 6-tuliposide A as substrate. kcat is 500 sec(-1) with 6-tuliposide B as substrate.</text>
    </kinetics>
</comment>
<comment type="subunit">
    <text evidence="2">Homodimer.</text>
</comment>
<comment type="subcellular location">
    <subcellularLocation>
        <location evidence="1">Plastid</location>
        <location evidence="1">Amyloplast</location>
    </subcellularLocation>
</comment>
<comment type="tissue specificity">
    <text evidence="2">Highly expressed in pistil and bulb scales. Lower expression in stem, and barely detected in root, leaf, petal and stamen.</text>
</comment>
<comment type="miscellaneous">
    <text evidence="4">6-tuliposide A and tuliposide A-converting enzyme, which are compartmentalized in the vacuoles and plastids respectively, come into contact with each other for the enzyme reaction releasing toxic tulipalin A upon cell disruption by pathogen infection or herbivore predation.</text>
</comment>
<comment type="similarity">
    <text evidence="3">Belongs to the AB hydrolase superfamily.</text>
</comment>
<reference key="1">
    <citation type="journal article" date="2013" name="Biosci. Biotechnol. Biochem.">
        <title>Molecular diversity of tuliposide A-converting enzyme in the tulip.</title>
        <authorList>
            <person name="Nomura T."/>
            <person name="Tsuchigami A."/>
            <person name="Ogita S."/>
            <person name="Kato Y."/>
        </authorList>
    </citation>
    <scope>NUCLEOTIDE SEQUENCE [GENOMIC DNA / MRNA]</scope>
    <scope>PROTEIN SEQUENCE OF N-TERMINUS</scope>
    <scope>SUBUNIT</scope>
    <scope>BIOPHYSICOCHEMICAL PROPERTIES</scope>
    <scope>TISSUE SPECIFICITY</scope>
    <source>
        <tissue>Bulb</tissue>
    </source>
</reference>
<evidence type="ECO:0000250" key="1"/>
<evidence type="ECO:0000269" key="2">
    <source>
    </source>
</evidence>
<evidence type="ECO:0000305" key="3"/>
<evidence type="ECO:0000305" key="4">
    <source>
    </source>
</evidence>
<gene>
    <name type="primary">TCEA-B2</name>
    <name type="synonym">TCEA-B4</name>
    <name type="synonym">TCEA-B5</name>
</gene>